<feature type="chain" id="PRO_0000457070" description="Hybrid PKS-NRPs synthetase opdA">
    <location>
        <begin position="1"/>
        <end position="3994"/>
    </location>
</feature>
<feature type="domain" description="Ketosynthase family 3 (KS3)" evidence="3 9">
    <location>
        <begin position="6"/>
        <end position="442"/>
    </location>
</feature>
<feature type="domain" description="PKS/mFAS DH" evidence="4">
    <location>
        <begin position="951"/>
        <end position="1252"/>
    </location>
</feature>
<feature type="domain" description="Carrier 1" evidence="2 9">
    <location>
        <begin position="2406"/>
        <end position="2483"/>
    </location>
</feature>
<feature type="domain" description="Carrier 2" evidence="2 9">
    <location>
        <begin position="3553"/>
        <end position="3630"/>
    </location>
</feature>
<feature type="region of interest" description="Malonyl-CoA:ACP transacylase (MAT) domain" evidence="1 9">
    <location>
        <begin position="559"/>
        <end position="881"/>
    </location>
</feature>
<feature type="region of interest" description="Dehydratase (DH) domain" evidence="1 9">
    <location>
        <begin position="951"/>
        <end position="1251"/>
    </location>
</feature>
<feature type="region of interest" description="N-terminal hotdog fold" evidence="4">
    <location>
        <begin position="951"/>
        <end position="1085"/>
    </location>
</feature>
<feature type="region of interest" description="C-terminal hotdog fold" evidence="4">
    <location>
        <begin position="1100"/>
        <end position="1252"/>
    </location>
</feature>
<feature type="region of interest" description="Methyltransferase (MT) domain" evidence="1 9">
    <location>
        <begin position="1292"/>
        <end position="1593"/>
    </location>
</feature>
<feature type="region of interest" description="Ketoreductase (KR) domain" evidence="1 9">
    <location>
        <begin position="2123"/>
        <end position="2297"/>
    </location>
</feature>
<feature type="region of interest" description="Disordered" evidence="5">
    <location>
        <begin position="2486"/>
        <end position="2575"/>
    </location>
</feature>
<feature type="region of interest" description="Condensation (C) domain" evidence="1 9">
    <location>
        <begin position="2582"/>
        <end position="3007"/>
    </location>
</feature>
<feature type="region of interest" description="Adenylation (A) (KR) domain" evidence="1 9">
    <location>
        <begin position="3043"/>
        <end position="3436"/>
    </location>
</feature>
<feature type="region of interest" description="Reductase (RED) domain" evidence="1 9">
    <location>
        <begin position="3679"/>
        <end position="3895"/>
    </location>
</feature>
<feature type="compositionally biased region" description="Polar residues" evidence="5">
    <location>
        <begin position="2505"/>
        <end position="2514"/>
    </location>
</feature>
<feature type="compositionally biased region" description="Polar residues" evidence="5">
    <location>
        <begin position="2522"/>
        <end position="2546"/>
    </location>
</feature>
<feature type="compositionally biased region" description="Basic and acidic residues" evidence="5">
    <location>
        <begin position="2547"/>
        <end position="2556"/>
    </location>
</feature>
<feature type="compositionally biased region" description="Acidic residues" evidence="5">
    <location>
        <begin position="2557"/>
        <end position="2570"/>
    </location>
</feature>
<feature type="active site" description="For beta-ketoacyl synthase activity" evidence="3">
    <location>
        <position position="179"/>
    </location>
</feature>
<feature type="active site" description="For beta-ketoacyl synthase activity" evidence="3">
    <location>
        <position position="316"/>
    </location>
</feature>
<feature type="active site" description="For beta-ketoacyl synthase activity" evidence="3">
    <location>
        <position position="362"/>
    </location>
</feature>
<feature type="active site" description="Proton acceptor; for dehydratase activity" evidence="4">
    <location>
        <position position="983"/>
    </location>
</feature>
<feature type="active site" description="Proton donor; for dehydratase activity" evidence="4">
    <location>
        <position position="1159"/>
    </location>
</feature>
<feature type="modified residue" description="O-(pantetheine 4'-phosphoryl)serine" evidence="2">
    <location>
        <position position="2443"/>
    </location>
</feature>
<feature type="modified residue" description="O-(pantetheine 4'-phosphoryl)serine" evidence="2">
    <location>
        <position position="3590"/>
    </location>
</feature>
<gene>
    <name evidence="7" type="primary">opdA</name>
    <name type="ORF">PDE_01235</name>
</gene>
<protein>
    <recommendedName>
        <fullName evidence="7">Hybrid PKS-NRPs synthetase opdA</fullName>
        <shortName evidence="7">PKS-NRPS iliA</shortName>
        <ecNumber evidence="9">2.3.1.-</ecNumber>
        <ecNumber evidence="9">6.3.2.-</ecNumber>
    </recommendedName>
    <alternativeName>
        <fullName evidence="7">Oxopyrrolidines biosynthesis cluster protein A</fullName>
    </alternativeName>
</protein>
<name>OPDA_PENO1</name>
<accession>S7Z800</accession>
<reference key="1">
    <citation type="journal article" date="2013" name="PLoS ONE">
        <title>Genomic and secretomic analyses reveal unique features of the lignocellulolytic enzyme system of Penicillium decumbens.</title>
        <authorList>
            <person name="Liu G."/>
            <person name="Zhang L."/>
            <person name="Wei X."/>
            <person name="Zou G."/>
            <person name="Qin Y."/>
            <person name="Ma L."/>
            <person name="Li J."/>
            <person name="Zheng H."/>
            <person name="Wang S."/>
            <person name="Wang C."/>
            <person name="Xun L."/>
            <person name="Zhao G.-P."/>
            <person name="Zhou Z."/>
            <person name="Qu Y."/>
        </authorList>
    </citation>
    <scope>NUCLEOTIDE SEQUENCE [LARGE SCALE GENOMIC DNA]</scope>
    <source>
        <strain>114-2 / CGMCC 5302</strain>
    </source>
</reference>
<reference key="2">
    <citation type="journal article" date="2022" name="Mar. Drugs">
        <title>Identification of PKS-NRPS Hybrid Metabolites in Marine-Derived Penicillium oxalicum.</title>
        <authorList>
            <person name="Li H."/>
            <person name="Zhang W."/>
            <person name="Zhang X."/>
            <person name="Tang S."/>
            <person name="Men P."/>
            <person name="Xiong M."/>
            <person name="Li Z."/>
            <person name="Zhang Y."/>
            <person name="Huang X."/>
            <person name="Lu X."/>
        </authorList>
    </citation>
    <scope>FUNCTION</scope>
    <scope>DOMAIN</scope>
    <scope>DISRUPTION PHENOTYPE</scope>
    <scope>PATHWAY</scope>
</reference>
<dbReference type="EC" id="2.3.1.-" evidence="9"/>
<dbReference type="EC" id="6.3.2.-" evidence="9"/>
<dbReference type="EMBL" id="KB644408">
    <property type="protein sequence ID" value="EPS26299.1"/>
    <property type="molecule type" value="Genomic_DNA"/>
</dbReference>
<dbReference type="SMR" id="S7Z800"/>
<dbReference type="STRING" id="933388.S7Z800"/>
<dbReference type="eggNOG" id="KOG1178">
    <property type="taxonomic scope" value="Eukaryota"/>
</dbReference>
<dbReference type="eggNOG" id="KOG1202">
    <property type="taxonomic scope" value="Eukaryota"/>
</dbReference>
<dbReference type="HOGENOM" id="CLU_000022_37_4_1"/>
<dbReference type="OrthoDB" id="329835at2759"/>
<dbReference type="PhylomeDB" id="S7Z800"/>
<dbReference type="Proteomes" id="UP000019376">
    <property type="component" value="Unassembled WGS sequence"/>
</dbReference>
<dbReference type="GO" id="GO:0004315">
    <property type="term" value="F:3-oxoacyl-[acyl-carrier-protein] synthase activity"/>
    <property type="evidence" value="ECO:0007669"/>
    <property type="project" value="InterPro"/>
</dbReference>
<dbReference type="GO" id="GO:0004312">
    <property type="term" value="F:fatty acid synthase activity"/>
    <property type="evidence" value="ECO:0007669"/>
    <property type="project" value="TreeGrafter"/>
</dbReference>
<dbReference type="GO" id="GO:0016874">
    <property type="term" value="F:ligase activity"/>
    <property type="evidence" value="ECO:0007669"/>
    <property type="project" value="UniProtKB-KW"/>
</dbReference>
<dbReference type="GO" id="GO:0008168">
    <property type="term" value="F:methyltransferase activity"/>
    <property type="evidence" value="ECO:0007669"/>
    <property type="project" value="UniProtKB-KW"/>
</dbReference>
<dbReference type="GO" id="GO:0031177">
    <property type="term" value="F:phosphopantetheine binding"/>
    <property type="evidence" value="ECO:0007669"/>
    <property type="project" value="InterPro"/>
</dbReference>
<dbReference type="GO" id="GO:0006633">
    <property type="term" value="P:fatty acid biosynthetic process"/>
    <property type="evidence" value="ECO:0007669"/>
    <property type="project" value="InterPro"/>
</dbReference>
<dbReference type="GO" id="GO:1901336">
    <property type="term" value="P:lactone biosynthetic process"/>
    <property type="evidence" value="ECO:0007669"/>
    <property type="project" value="UniProtKB-ARBA"/>
</dbReference>
<dbReference type="GO" id="GO:0032259">
    <property type="term" value="P:methylation"/>
    <property type="evidence" value="ECO:0007669"/>
    <property type="project" value="UniProtKB-KW"/>
</dbReference>
<dbReference type="GO" id="GO:0030639">
    <property type="term" value="P:polyketide biosynthetic process"/>
    <property type="evidence" value="ECO:0007669"/>
    <property type="project" value="UniProtKB-ARBA"/>
</dbReference>
<dbReference type="GO" id="GO:0009403">
    <property type="term" value="P:toxin biosynthetic process"/>
    <property type="evidence" value="ECO:0007669"/>
    <property type="project" value="UniProtKB-ARBA"/>
</dbReference>
<dbReference type="CDD" id="cd05930">
    <property type="entry name" value="A_NRPS"/>
    <property type="match status" value="1"/>
</dbReference>
<dbReference type="CDD" id="cd02440">
    <property type="entry name" value="AdoMet_MTases"/>
    <property type="match status" value="1"/>
</dbReference>
<dbReference type="CDD" id="cd19532">
    <property type="entry name" value="C_PKS-NRPS"/>
    <property type="match status" value="1"/>
</dbReference>
<dbReference type="CDD" id="cd00833">
    <property type="entry name" value="PKS"/>
    <property type="match status" value="1"/>
</dbReference>
<dbReference type="Gene3D" id="3.30.300.30">
    <property type="match status" value="1"/>
</dbReference>
<dbReference type="Gene3D" id="3.30.70.3290">
    <property type="match status" value="1"/>
</dbReference>
<dbReference type="Gene3D" id="3.40.47.10">
    <property type="match status" value="1"/>
</dbReference>
<dbReference type="Gene3D" id="1.10.1200.10">
    <property type="entry name" value="ACP-like"/>
    <property type="match status" value="2"/>
</dbReference>
<dbReference type="Gene3D" id="3.30.559.10">
    <property type="entry name" value="Chloramphenicol acetyltransferase-like domain"/>
    <property type="match status" value="1"/>
</dbReference>
<dbReference type="Gene3D" id="3.40.366.10">
    <property type="entry name" value="Malonyl-Coenzyme A Acyl Carrier Protein, domain 2"/>
    <property type="match status" value="1"/>
</dbReference>
<dbReference type="Gene3D" id="3.40.50.12780">
    <property type="entry name" value="N-terminal domain of ligase-like"/>
    <property type="match status" value="1"/>
</dbReference>
<dbReference type="Gene3D" id="3.40.50.720">
    <property type="entry name" value="NAD(P)-binding Rossmann-like Domain"/>
    <property type="match status" value="2"/>
</dbReference>
<dbReference type="Gene3D" id="3.30.559.30">
    <property type="entry name" value="Nonribosomal peptide synthetase, condensation domain"/>
    <property type="match status" value="1"/>
</dbReference>
<dbReference type="Gene3D" id="3.10.129.110">
    <property type="entry name" value="Polyketide synthase dehydratase"/>
    <property type="match status" value="1"/>
</dbReference>
<dbReference type="Gene3D" id="3.40.50.150">
    <property type="entry name" value="Vaccinia Virus protein VP39"/>
    <property type="match status" value="1"/>
</dbReference>
<dbReference type="InterPro" id="IPR001227">
    <property type="entry name" value="Ac_transferase_dom_sf"/>
</dbReference>
<dbReference type="InterPro" id="IPR036736">
    <property type="entry name" value="ACP-like_sf"/>
</dbReference>
<dbReference type="InterPro" id="IPR014043">
    <property type="entry name" value="Acyl_transferase_dom"/>
</dbReference>
<dbReference type="InterPro" id="IPR016035">
    <property type="entry name" value="Acyl_Trfase/lysoPLipase"/>
</dbReference>
<dbReference type="InterPro" id="IPR045851">
    <property type="entry name" value="AMP-bd_C_sf"/>
</dbReference>
<dbReference type="InterPro" id="IPR000873">
    <property type="entry name" value="AMP-dep_synth/lig_dom"/>
</dbReference>
<dbReference type="InterPro" id="IPR042099">
    <property type="entry name" value="ANL_N_sf"/>
</dbReference>
<dbReference type="InterPro" id="IPR023213">
    <property type="entry name" value="CAT-like_dom_sf"/>
</dbReference>
<dbReference type="InterPro" id="IPR001242">
    <property type="entry name" value="Condensatn"/>
</dbReference>
<dbReference type="InterPro" id="IPR013120">
    <property type="entry name" value="Far_NAD-bd"/>
</dbReference>
<dbReference type="InterPro" id="IPR018201">
    <property type="entry name" value="Ketoacyl_synth_AS"/>
</dbReference>
<dbReference type="InterPro" id="IPR014031">
    <property type="entry name" value="Ketoacyl_synth_C"/>
</dbReference>
<dbReference type="InterPro" id="IPR014030">
    <property type="entry name" value="Ketoacyl_synth_N"/>
</dbReference>
<dbReference type="InterPro" id="IPR016036">
    <property type="entry name" value="Malonyl_transacylase_ACP-bd"/>
</dbReference>
<dbReference type="InterPro" id="IPR013217">
    <property type="entry name" value="Methyltransf_12"/>
</dbReference>
<dbReference type="InterPro" id="IPR036291">
    <property type="entry name" value="NAD(P)-bd_dom_sf"/>
</dbReference>
<dbReference type="InterPro" id="IPR032821">
    <property type="entry name" value="PKS_assoc"/>
</dbReference>
<dbReference type="InterPro" id="IPR020841">
    <property type="entry name" value="PKS_Beta-ketoAc_synthase_dom"/>
</dbReference>
<dbReference type="InterPro" id="IPR042104">
    <property type="entry name" value="PKS_dehydratase_sf"/>
</dbReference>
<dbReference type="InterPro" id="IPR020807">
    <property type="entry name" value="PKS_DH"/>
</dbReference>
<dbReference type="InterPro" id="IPR049551">
    <property type="entry name" value="PKS_DH_C"/>
</dbReference>
<dbReference type="InterPro" id="IPR049552">
    <property type="entry name" value="PKS_DH_N"/>
</dbReference>
<dbReference type="InterPro" id="IPR013968">
    <property type="entry name" value="PKS_KR"/>
</dbReference>
<dbReference type="InterPro" id="IPR049900">
    <property type="entry name" value="PKS_mFAS_DH"/>
</dbReference>
<dbReference type="InterPro" id="IPR050091">
    <property type="entry name" value="PKS_NRPS_Biosynth_Enz"/>
</dbReference>
<dbReference type="InterPro" id="IPR020806">
    <property type="entry name" value="PKS_PP-bd"/>
</dbReference>
<dbReference type="InterPro" id="IPR009081">
    <property type="entry name" value="PP-bd_ACP"/>
</dbReference>
<dbReference type="InterPro" id="IPR006162">
    <property type="entry name" value="Ppantetheine_attach_site"/>
</dbReference>
<dbReference type="InterPro" id="IPR029063">
    <property type="entry name" value="SAM-dependent_MTases_sf"/>
</dbReference>
<dbReference type="InterPro" id="IPR016039">
    <property type="entry name" value="Thiolase-like"/>
</dbReference>
<dbReference type="PANTHER" id="PTHR43775">
    <property type="entry name" value="FATTY ACID SYNTHASE"/>
    <property type="match status" value="1"/>
</dbReference>
<dbReference type="PANTHER" id="PTHR43775:SF20">
    <property type="entry name" value="HYBRID PKS-NRPS SYNTHETASE APDA"/>
    <property type="match status" value="1"/>
</dbReference>
<dbReference type="Pfam" id="PF00698">
    <property type="entry name" value="Acyl_transf_1"/>
    <property type="match status" value="1"/>
</dbReference>
<dbReference type="Pfam" id="PF00501">
    <property type="entry name" value="AMP-binding"/>
    <property type="match status" value="1"/>
</dbReference>
<dbReference type="Pfam" id="PF00668">
    <property type="entry name" value="Condensation"/>
    <property type="match status" value="1"/>
</dbReference>
<dbReference type="Pfam" id="PF16197">
    <property type="entry name" value="KAsynt_C_assoc"/>
    <property type="match status" value="1"/>
</dbReference>
<dbReference type="Pfam" id="PF00109">
    <property type="entry name" value="ketoacyl-synt"/>
    <property type="match status" value="1"/>
</dbReference>
<dbReference type="Pfam" id="PF02801">
    <property type="entry name" value="Ketoacyl-synt_C"/>
    <property type="match status" value="1"/>
</dbReference>
<dbReference type="Pfam" id="PF08659">
    <property type="entry name" value="KR"/>
    <property type="match status" value="1"/>
</dbReference>
<dbReference type="Pfam" id="PF08242">
    <property type="entry name" value="Methyltransf_12"/>
    <property type="match status" value="1"/>
</dbReference>
<dbReference type="Pfam" id="PF07993">
    <property type="entry name" value="NAD_binding_4"/>
    <property type="match status" value="1"/>
</dbReference>
<dbReference type="Pfam" id="PF21089">
    <property type="entry name" value="PKS_DH_N"/>
    <property type="match status" value="1"/>
</dbReference>
<dbReference type="Pfam" id="PF00550">
    <property type="entry name" value="PP-binding"/>
    <property type="match status" value="2"/>
</dbReference>
<dbReference type="Pfam" id="PF14765">
    <property type="entry name" value="PS-DH"/>
    <property type="match status" value="1"/>
</dbReference>
<dbReference type="SMART" id="SM00827">
    <property type="entry name" value="PKS_AT"/>
    <property type="match status" value="1"/>
</dbReference>
<dbReference type="SMART" id="SM00826">
    <property type="entry name" value="PKS_DH"/>
    <property type="match status" value="1"/>
</dbReference>
<dbReference type="SMART" id="SM00822">
    <property type="entry name" value="PKS_KR"/>
    <property type="match status" value="1"/>
</dbReference>
<dbReference type="SMART" id="SM00825">
    <property type="entry name" value="PKS_KS"/>
    <property type="match status" value="1"/>
</dbReference>
<dbReference type="SMART" id="SM00823">
    <property type="entry name" value="PKS_PP"/>
    <property type="match status" value="1"/>
</dbReference>
<dbReference type="SUPFAM" id="SSF56801">
    <property type="entry name" value="Acetyl-CoA synthetase-like"/>
    <property type="match status" value="1"/>
</dbReference>
<dbReference type="SUPFAM" id="SSF47336">
    <property type="entry name" value="ACP-like"/>
    <property type="match status" value="2"/>
</dbReference>
<dbReference type="SUPFAM" id="SSF52777">
    <property type="entry name" value="CoA-dependent acyltransferases"/>
    <property type="match status" value="2"/>
</dbReference>
<dbReference type="SUPFAM" id="SSF52151">
    <property type="entry name" value="FabD/lysophospholipase-like"/>
    <property type="match status" value="1"/>
</dbReference>
<dbReference type="SUPFAM" id="SSF51735">
    <property type="entry name" value="NAD(P)-binding Rossmann-fold domains"/>
    <property type="match status" value="2"/>
</dbReference>
<dbReference type="SUPFAM" id="SSF55048">
    <property type="entry name" value="Probable ACP-binding domain of malonyl-CoA ACP transacylase"/>
    <property type="match status" value="1"/>
</dbReference>
<dbReference type="SUPFAM" id="SSF53335">
    <property type="entry name" value="S-adenosyl-L-methionine-dependent methyltransferases"/>
    <property type="match status" value="1"/>
</dbReference>
<dbReference type="SUPFAM" id="SSF53901">
    <property type="entry name" value="Thiolase-like"/>
    <property type="match status" value="1"/>
</dbReference>
<dbReference type="PROSITE" id="PS50075">
    <property type="entry name" value="CARRIER"/>
    <property type="match status" value="2"/>
</dbReference>
<dbReference type="PROSITE" id="PS00606">
    <property type="entry name" value="KS3_1"/>
    <property type="match status" value="1"/>
</dbReference>
<dbReference type="PROSITE" id="PS52004">
    <property type="entry name" value="KS3_2"/>
    <property type="match status" value="1"/>
</dbReference>
<dbReference type="PROSITE" id="PS00012">
    <property type="entry name" value="PHOSPHOPANTETHEINE"/>
    <property type="match status" value="1"/>
</dbReference>
<dbReference type="PROSITE" id="PS52019">
    <property type="entry name" value="PKS_MFAS_DH"/>
    <property type="match status" value="1"/>
</dbReference>
<sequence length="3994" mass="440514">MSPSIPEPIAIVGSSCRFPGSSSSPSKLWDLLREPRDVRRNLSQNLNLQRFYHPSGENHGSTDVKGLGYLLAEDSRLFDPAVFGISPYEAETIDPQQRILLEIVYESMENAGYTLAQMRGSQTSVHVGVMTDDYHDIQLRDVESLPQYTSTGTARSMMANRISYVFDLHGPSVTIDTACSSSLVALHQAVQSLQLGEATCAVVGGVNLIFDPAMYVAESNLHMLSPDSQSRMWDKTANGYARGEGAAAVLLKPLSQALRDNDHIEGLIRGSGVNSDGQSPGITMPTATAQAALIRATYKRAGLDPIKDRCQYFECHGTGTAAGDPVEAQAISEALFEEATFTNEATDTPPLYVGSIKTVTGHLEGCAGLAGLLKALVSIKNRIIPPNMLFNELNPKIEPYYGRMQITTVPIPWPNVGTGAPLRVSINSFGFGGTNSHVILESYESSGQRNLELASKKNALLGPIVLSAHSGASLLGNAKNMLQYLKDNPSVNLSDLSYVLQTRRTAHRARAFFSSSSHQGLINKLQDFVGDNEKISKKSTIGIRHKPVNSSETPGILGVFTGQGAQWPRMGRMLLDHCPLFRDVLERCDATLQALPDHPEWLLVDELCKHAEVSRVGEAAISQPLCTAIQLGLLEVLFSSGIHFDAVVGHSSGEIAAVYACGIISLSAAMQIAFYRGRYASLAQGANGEVGAMMAVGISHREAQKFCQKSEYQGHISVAASNGVQSVTLSGDSEFIQQAKEHFESENVFARLLKVDTAYHSQHMKRCAGPYLQSLEACNIQVRQPREGCFWNSSVRGDTELLRGDLRSLKGPYWVQNMVQTVLFSQAVRSSIWHGGPYDVVIEVGPHPALKGPTEQTLQSAFGATPTYTGVLKRDSNDVEALFDAIGVVWAHLGPQFVNFEGLWRTLVPDSTQLSPRLLKDLPKYSWDHERVYWRESRISARFRRGNDVFHELLGRRTHDDTDRELRWRNILKLSELPWVQGHTIMGEALLPGASYVALAFQAGHAIAAGRRVQLMEVQDVEIRRPIVVPDSREGQDTIFTVHLLDARDPNMIEGHFSYCYCSDTSTGAMVRTCEGRLIIHLGETTGDELPPYTPPPPNLLSVDTDEGYEVLAQAGLLYSGIFRRLQDVERRLDFAEAKAQWATEELRGEYVVHPALLDVSFQSIFHARADPSTGKLPVSVLPVHIKRVVVNPKATLGAQMGTIRTMTQSFVTARDGLSLSGDIHVFDAMTGEAALQVEALSVKPMAPPTAEQDTRLFFDTVFMADPSLNLLEPQRNPVDDTRDMALVSDIDRVVLYYVQRVLEQLDPEEVAGFSWYFKRMLDAYEYWVQLVRADRHPVAPSSWLADEFEVIDEIYTRWPGQIELEIARAIGENIVDVMHGKMQMLEVLMENDRLGRMYYEGCGFTIVNAGLRNVMEQISNKYPQAKYLEIGAGTGSASHAILSSIGTTFDNYTYTDISTGFFENAAKRFAQFSHKMLFKTLDVEKDVVAQGYDMHSYDVVVASNVLHATGNLQLTLENVRSLLKPGGFLLLIEITGIEIMRVGYIMGGLPGWWLGAKEGRRFHPGLTTEDWDRTLQDTGYSGVDLAFHDLPDSDRHCMSLLVSQAVDETVLQLREPLGYIEDVPKTDNLLLIGGRTLPISKLTSTVQRLAGSSWRSRVVVARDIEAVDFSLLSSSVDVVCLQELDAPLFSNFITTKRLEALQAIILHSRNVLWVTKSRRAENPYQNMFLGMARAIWKEMAHVTIQSLDVETITNPNNVARTILETFLRMKILSGVDNQSTLLWTREQELIIEGGETLIARLRPNQELNDRYNARYRTVTKSVNGSHAAIRLIQQGDKMAFTETDDHHPADTIEHVTVKTSFSLTVPGDSSQGSTYLVVGREIDVGTPLLAVSHIDASVLRVPQTDTIPIDEASCNELFLERFLNNIFSDTLLNLIAAGGSVTLYQPRNGLAAVIAATAEDRGIEVFFVCSTSGDVAVPENWIWMHPHSSPRIIRSLLPRNDSIFVNCSGLSNYLTSAIHSVLPSHLPVLELESWVFQTGLSVLRGCGSLAAGYDSLLSRLPRLNAALPLSGDLPLFNMDQIAGAKASTQEITHITSWEKAKDFLTLVVQPPDPTTMFDARKTYLMVGMAGGLGLSICEWALRHGAKQMVITSRNPEIHSQWLADARHKGTIVHVKSMDVTDRASVDTTVRWIQDTLPPIAGVCNAAMVLTDRMFANMDADAINRTLNPKVNGSKYLDEVFANTPLDFFILLSSCGAIMGSKGQSNYHAANMYMSALATQRRERGFAASIIHIGFVTDVGYTTRNKGTLKDVWAQFEFRFLSEMDVHHAFAEAIVSGRPNSHRSCEVGVGINPLTEPFTADRKPAWASDPRFSHYLPSTNLQNEVVARSRQEDLKERLMDVSTEDEAVEITQKAFSSKLETMMQLPVGSLSVQASLIELGIDSLVAVDIRNWFLRELGADIPVLKILGGDSVAQICTNAAKQLLAQKGGQEPSEQEEVEPESTTLHVSQGSLHTPSEGLEFTETSSVGGTENTPLTSASSSPSVTDTVEKRDKGDISVDEGPNEQFDPDDRDYNPDIIETERLSSGQSRIYILSRFLNNPTDYNLVFQFEIDGCLDMELLRDAFTVTTQHHESLRTCYFVRQEDNQPMQGVLASPVVRFQHVPDATADEIAAEVALGKSRVWDLERGETMAMTVFSLSPQSHTMVFSYHHIIMDSTGWRVFFQDLALAYHMEPLQHASKTYVEYTRKQIAQQQTGHFQSQLQYWKQEYSSFPPVLPLLPMSRVKTRPNAQSSGITYSRLEIGYEVAQAMKASCQKLRITAFHFHLAVFQVMLSQLAGIDDICIGVADANRLDGEFAETVGFFMNMLPVRFHVSPNAKFSQIAQGTARKVLGAVQNSAVPFDMILDDLHVARSSSHTPLFQAAINYQLRVAKKLPFAGSSLTLFDAQDAKNPYDLSLGIIEYHSEGFILDMSCQESLYDAAATRTILETYVQILEGVVSNTYMTVAKIPIHAPIAVIDAVRLGQGPQVDFSWPATLSQQFQAIHETNREDLAICDGDQSLTYDQLTDRVNSIASALKTVGHTTSLRVAVLCRPSVDFTASMLAILHIGALYIPLDISLPPARHAAIIDSARPSVVICHDATIELASQLGAGSEGNRMPIIRVDDVEVAKERVPCNARPEAPAVLLYTSGSVGKPKGVVLTQANFVNHIALKIHELNLRLGCEKILQQSSLGFDMSIIQIFCALCTGGTLFIVPYESRRDALHITQLMSKHRITITIATPSEYLTWLHYGWDSLVQCFDWRWACMGGEVVQPPLMREFQRLGLASLSCLNCYGPTEITAAATFHRISLKEDVLKLESTVGKAIPNYTLRIVDFSGRTQPVGFRGEICIGGAGLALGYWESLEETARAFFVDGSSTRWYRTGDQGRLTADGSLVFLGRLEGSTQVKVRGLRIELEEVEKALLEVGASLFSTVVVTVRDDALMAYATPLVNQGDDIEPAIITELLAGLPLPQYMCPSQVIIVDDLPCNSNGKIDRNALATLPFSAPSQGLFNPQTAPKLSLRQSELRILWEKVLPPTSHPLMAESDFFLEGGNSLRLLKLQHAIKESMGTSITTRELYEASTLQKMTMLVDLERDRQTVKSKLIDWEAETAIPESLITIAQDAIGAVKRSPVDDDEVVEVLMTGATGFLGGSILKELLQNVHIRRVHCVAILPDEQGHLPSDSKVVHYTGSLSSPTLGLSPSECLALQESIDVVIHAGANGHCLNNYTSVREANVHPTQFLASLCVPHSIPLLYISSPRVPLLTGNTAPLPGPVPTQPPTTGAEGYTASKWASEQFLQRMSNHASMRIEIHRPCVVIGDQAPASDALNAILRYSLKMKCLPKFSRVEGFFDFKKVEEVAQDLVSSTVALGLGRGRSQTGREAKVHFQHHSSGKKVAFSAMAKHMKEMYGEEFSEMEILDWLERALKEGMDPLISSYLESLVENGDTLQFPYLGEVHSS</sequence>
<keyword id="KW-0436">Ligase</keyword>
<keyword id="KW-0489">Methyltransferase</keyword>
<keyword id="KW-0511">Multifunctional enzyme</keyword>
<keyword id="KW-0596">Phosphopantetheine</keyword>
<keyword id="KW-0597">Phosphoprotein</keyword>
<keyword id="KW-1185">Reference proteome</keyword>
<keyword id="KW-0677">Repeat</keyword>
<keyword id="KW-0808">Transferase</keyword>
<organism>
    <name type="scientific">Penicillium oxalicum (strain 114-2 / CGMCC 5302)</name>
    <name type="common">Penicillium decumbens</name>
    <dbReference type="NCBI Taxonomy" id="933388"/>
    <lineage>
        <taxon>Eukaryota</taxon>
        <taxon>Fungi</taxon>
        <taxon>Dikarya</taxon>
        <taxon>Ascomycota</taxon>
        <taxon>Pezizomycotina</taxon>
        <taxon>Eurotiomycetes</taxon>
        <taxon>Eurotiomycetidae</taxon>
        <taxon>Eurotiales</taxon>
        <taxon>Aspergillaceae</taxon>
        <taxon>Penicillium</taxon>
    </lineage>
</organism>
<proteinExistence type="inferred from homology"/>
<evidence type="ECO:0000255" key="1"/>
<evidence type="ECO:0000255" key="2">
    <source>
        <dbReference type="PROSITE-ProRule" id="PRU00258"/>
    </source>
</evidence>
<evidence type="ECO:0000255" key="3">
    <source>
        <dbReference type="PROSITE-ProRule" id="PRU01348"/>
    </source>
</evidence>
<evidence type="ECO:0000255" key="4">
    <source>
        <dbReference type="PROSITE-ProRule" id="PRU01363"/>
    </source>
</evidence>
<evidence type="ECO:0000256" key="5">
    <source>
        <dbReference type="SAM" id="MobiDB-lite"/>
    </source>
</evidence>
<evidence type="ECO:0000269" key="6">
    <source>
    </source>
</evidence>
<evidence type="ECO:0000303" key="7">
    <source>
    </source>
</evidence>
<evidence type="ECO:0000305" key="8"/>
<evidence type="ECO:0000305" key="9">
    <source>
    </source>
</evidence>
<comment type="function">
    <text evidence="6">Hybrid PKS-NRPS synthetase; part of the gene cluster that mediates the biosynthesis of oxopyrrolidines, polyketide-amino acid hybrid compounds with feature structures of tetramic acid (PubMed:36005526). The polyketide chain is first assembled by the highly reducing PKS module of opdA using acetyl-CoA as the starter unit and five malonyl-CoA as the extender units (PubMed:36005526). OpdC acts as trans-acting enoyl reductase and reduces the terminal alkenyl to alkane (PubMed:36005526). The 17R in oxopyrrolidine A and 15R, 17S in oxopyrrolidine B are generated by non-stereospecific catalysis of the ketoreductase (KR) domain and enoyl reductases (PubMed:36005526). Then the polyketides with specific configurations are transferred to the NRPS module of opdA and linked to L-tyrosine to form an amide bond (PubMed:36005526). Finally, the oxopyrrolidines are offloaded through a Dieckmann cyclization catalyzed by the terminal D domain to give a tetramic acid moiety (PubMed:36005526).</text>
</comment>
<comment type="cofactor">
    <cofactor evidence="2">
        <name>pantetheine 4'-phosphate</name>
        <dbReference type="ChEBI" id="CHEBI:47942"/>
    </cofactor>
</comment>
<comment type="pathway">
    <text evidence="6">Secondary metabolite biosynthesis.</text>
</comment>
<comment type="domain">
    <text evidence="9">opdA has the following domain architecture: KS-MAT-DH-MT-KR-ACP-C-A-T-R. The PKS module (domains KS to ACP) is responsible for the biosynthesis of the polyketide chain. The downstream NRPS module contains the condensation (C), adenylation (A), and thiolation (T) domains and catalyzes the formation of the L-tyrosinyl-thioester and the amide linkage between L-tyrosinyl-thioester and the polyketide. The bimodular assembly line is terminated with a putative reductase (R) domain that facilitates formation and release of the tetramic acid product.</text>
</comment>
<comment type="disruption phenotype">
    <text evidence="6">Impairs the production of oxopyrrolidines A and B.</text>
</comment>
<comment type="similarity">
    <text evidence="8">In the C-terminal section; belongs to the NRP synthetase family.</text>
</comment>